<protein>
    <recommendedName>
        <fullName>Histone deacetylase complex subunit SAP25</fullName>
    </recommendedName>
    <alternativeName>
        <fullName>25 kDa Sin3-associated polypeptide</fullName>
    </alternativeName>
    <alternativeName>
        <fullName>Sin3 corepressor complex subunit SAP25</fullName>
    </alternativeName>
    <alternativeName>
        <fullName>mSin3A-binding protein</fullName>
    </alternativeName>
</protein>
<accession>Q1EHW4</accession>
<reference key="1">
    <citation type="journal article" date="2006" name="Mol. Cell. Biol.">
        <title>Identification and characterization of SAP25, a novel component of the mSin3 corepressor complex.</title>
        <authorList>
            <person name="Shiio Y."/>
            <person name="Rose D.W."/>
            <person name="Aur R."/>
            <person name="Donohoe S."/>
            <person name="Aebersold R."/>
            <person name="Eisenman R.N."/>
        </authorList>
    </citation>
    <scope>NUCLEOTIDE SEQUENCE [MRNA]</scope>
    <scope>FUNCTION</scope>
    <scope>TISSUE SPECIFICITY</scope>
    <scope>SUBCELLULAR LOCATION</scope>
    <scope>INTERACTION WITH SIN3A AND HDAC2</scope>
</reference>
<reference key="2">
    <citation type="journal article" date="2005" name="Science">
        <title>The transcriptional landscape of the mammalian genome.</title>
        <authorList>
            <person name="Carninci P."/>
            <person name="Kasukawa T."/>
            <person name="Katayama S."/>
            <person name="Gough J."/>
            <person name="Frith M.C."/>
            <person name="Maeda N."/>
            <person name="Oyama R."/>
            <person name="Ravasi T."/>
            <person name="Lenhard B."/>
            <person name="Wells C."/>
            <person name="Kodzius R."/>
            <person name="Shimokawa K."/>
            <person name="Bajic V.B."/>
            <person name="Brenner S.E."/>
            <person name="Batalov S."/>
            <person name="Forrest A.R."/>
            <person name="Zavolan M."/>
            <person name="Davis M.J."/>
            <person name="Wilming L.G."/>
            <person name="Aidinis V."/>
            <person name="Allen J.E."/>
            <person name="Ambesi-Impiombato A."/>
            <person name="Apweiler R."/>
            <person name="Aturaliya R.N."/>
            <person name="Bailey T.L."/>
            <person name="Bansal M."/>
            <person name="Baxter L."/>
            <person name="Beisel K.W."/>
            <person name="Bersano T."/>
            <person name="Bono H."/>
            <person name="Chalk A.M."/>
            <person name="Chiu K.P."/>
            <person name="Choudhary V."/>
            <person name="Christoffels A."/>
            <person name="Clutterbuck D.R."/>
            <person name="Crowe M.L."/>
            <person name="Dalla E."/>
            <person name="Dalrymple B.P."/>
            <person name="de Bono B."/>
            <person name="Della Gatta G."/>
            <person name="di Bernardo D."/>
            <person name="Down T."/>
            <person name="Engstrom P."/>
            <person name="Fagiolini M."/>
            <person name="Faulkner G."/>
            <person name="Fletcher C.F."/>
            <person name="Fukushima T."/>
            <person name="Furuno M."/>
            <person name="Futaki S."/>
            <person name="Gariboldi M."/>
            <person name="Georgii-Hemming P."/>
            <person name="Gingeras T.R."/>
            <person name="Gojobori T."/>
            <person name="Green R.E."/>
            <person name="Gustincich S."/>
            <person name="Harbers M."/>
            <person name="Hayashi Y."/>
            <person name="Hensch T.K."/>
            <person name="Hirokawa N."/>
            <person name="Hill D."/>
            <person name="Huminiecki L."/>
            <person name="Iacono M."/>
            <person name="Ikeo K."/>
            <person name="Iwama A."/>
            <person name="Ishikawa T."/>
            <person name="Jakt M."/>
            <person name="Kanapin A."/>
            <person name="Katoh M."/>
            <person name="Kawasawa Y."/>
            <person name="Kelso J."/>
            <person name="Kitamura H."/>
            <person name="Kitano H."/>
            <person name="Kollias G."/>
            <person name="Krishnan S.P."/>
            <person name="Kruger A."/>
            <person name="Kummerfeld S.K."/>
            <person name="Kurochkin I.V."/>
            <person name="Lareau L.F."/>
            <person name="Lazarevic D."/>
            <person name="Lipovich L."/>
            <person name="Liu J."/>
            <person name="Liuni S."/>
            <person name="McWilliam S."/>
            <person name="Madan Babu M."/>
            <person name="Madera M."/>
            <person name="Marchionni L."/>
            <person name="Matsuda H."/>
            <person name="Matsuzawa S."/>
            <person name="Miki H."/>
            <person name="Mignone F."/>
            <person name="Miyake S."/>
            <person name="Morris K."/>
            <person name="Mottagui-Tabar S."/>
            <person name="Mulder N."/>
            <person name="Nakano N."/>
            <person name="Nakauchi H."/>
            <person name="Ng P."/>
            <person name="Nilsson R."/>
            <person name="Nishiguchi S."/>
            <person name="Nishikawa S."/>
            <person name="Nori F."/>
            <person name="Ohara O."/>
            <person name="Okazaki Y."/>
            <person name="Orlando V."/>
            <person name="Pang K.C."/>
            <person name="Pavan W.J."/>
            <person name="Pavesi G."/>
            <person name="Pesole G."/>
            <person name="Petrovsky N."/>
            <person name="Piazza S."/>
            <person name="Reed J."/>
            <person name="Reid J.F."/>
            <person name="Ring B.Z."/>
            <person name="Ringwald M."/>
            <person name="Rost B."/>
            <person name="Ruan Y."/>
            <person name="Salzberg S.L."/>
            <person name="Sandelin A."/>
            <person name="Schneider C."/>
            <person name="Schoenbach C."/>
            <person name="Sekiguchi K."/>
            <person name="Semple C.A."/>
            <person name="Seno S."/>
            <person name="Sessa L."/>
            <person name="Sheng Y."/>
            <person name="Shibata Y."/>
            <person name="Shimada H."/>
            <person name="Shimada K."/>
            <person name="Silva D."/>
            <person name="Sinclair B."/>
            <person name="Sperling S."/>
            <person name="Stupka E."/>
            <person name="Sugiura K."/>
            <person name="Sultana R."/>
            <person name="Takenaka Y."/>
            <person name="Taki K."/>
            <person name="Tammoja K."/>
            <person name="Tan S.L."/>
            <person name="Tang S."/>
            <person name="Taylor M.S."/>
            <person name="Tegner J."/>
            <person name="Teichmann S.A."/>
            <person name="Ueda H.R."/>
            <person name="van Nimwegen E."/>
            <person name="Verardo R."/>
            <person name="Wei C.L."/>
            <person name="Yagi K."/>
            <person name="Yamanishi H."/>
            <person name="Zabarovsky E."/>
            <person name="Zhu S."/>
            <person name="Zimmer A."/>
            <person name="Hide W."/>
            <person name="Bult C."/>
            <person name="Grimmond S.M."/>
            <person name="Teasdale R.D."/>
            <person name="Liu E.T."/>
            <person name="Brusic V."/>
            <person name="Quackenbush J."/>
            <person name="Wahlestedt C."/>
            <person name="Mattick J.S."/>
            <person name="Hume D.A."/>
            <person name="Kai C."/>
            <person name="Sasaki D."/>
            <person name="Tomaru Y."/>
            <person name="Fukuda S."/>
            <person name="Kanamori-Katayama M."/>
            <person name="Suzuki M."/>
            <person name="Aoki J."/>
            <person name="Arakawa T."/>
            <person name="Iida J."/>
            <person name="Imamura K."/>
            <person name="Itoh M."/>
            <person name="Kato T."/>
            <person name="Kawaji H."/>
            <person name="Kawagashira N."/>
            <person name="Kawashima T."/>
            <person name="Kojima M."/>
            <person name="Kondo S."/>
            <person name="Konno H."/>
            <person name="Nakano K."/>
            <person name="Ninomiya N."/>
            <person name="Nishio T."/>
            <person name="Okada M."/>
            <person name="Plessy C."/>
            <person name="Shibata K."/>
            <person name="Shiraki T."/>
            <person name="Suzuki S."/>
            <person name="Tagami M."/>
            <person name="Waki K."/>
            <person name="Watahiki A."/>
            <person name="Okamura-Oho Y."/>
            <person name="Suzuki H."/>
            <person name="Kawai J."/>
            <person name="Hayashizaki Y."/>
        </authorList>
    </citation>
    <scope>NUCLEOTIDE SEQUENCE [LARGE SCALE MRNA]</scope>
</reference>
<reference key="3">
    <citation type="journal article" date="2008" name="J. Mol. Biol.">
        <title>Conserved themes in target recognition by the PAH1 and PAH2 domains of the Sin3 transcriptional corepressor.</title>
        <authorList>
            <person name="Sahu S.C."/>
            <person name="Swanson K.A."/>
            <person name="Kang R.S."/>
            <person name="Huang K."/>
            <person name="Brubaker K."/>
            <person name="Ratcliff K."/>
            <person name="Radhakrishnan I."/>
        </authorList>
    </citation>
    <scope>STRUCTURE BY NMR OF 126-186 IN COMPLEX WITH SIN3A</scope>
</reference>
<proteinExistence type="evidence at protein level"/>
<dbReference type="EMBL" id="AM275337">
    <property type="protein sequence ID" value="CAK36853.1"/>
    <property type="molecule type" value="mRNA"/>
</dbReference>
<dbReference type="EMBL" id="AK164339">
    <property type="status" value="NOT_ANNOTATED_CDS"/>
    <property type="molecule type" value="mRNA"/>
</dbReference>
<dbReference type="EMBL" id="AK158025">
    <property type="status" value="NOT_ANNOTATED_CDS"/>
    <property type="molecule type" value="mRNA"/>
</dbReference>
<dbReference type="RefSeq" id="NP_001075431.2">
    <property type="nucleotide sequence ID" value="NM_001081962.2"/>
</dbReference>
<dbReference type="PDB" id="2RMS">
    <property type="method" value="NMR"/>
    <property type="chains" value="B=126-186"/>
</dbReference>
<dbReference type="PDBsum" id="2RMS"/>
<dbReference type="BMRB" id="Q1EHW4"/>
<dbReference type="SMR" id="Q1EHW4"/>
<dbReference type="FunCoup" id="Q1EHW4">
    <property type="interactions" value="17"/>
</dbReference>
<dbReference type="IntAct" id="Q1EHW4">
    <property type="interactions" value="31"/>
</dbReference>
<dbReference type="GlyGen" id="Q1EHW4">
    <property type="glycosylation" value="2 sites, 1 O-linked glycan (2 sites)"/>
</dbReference>
<dbReference type="PhosphoSitePlus" id="Q1EHW4"/>
<dbReference type="PaxDb" id="10090-ENSMUSP00000127076"/>
<dbReference type="ProteomicsDB" id="256700"/>
<dbReference type="DNASU" id="751865"/>
<dbReference type="GeneID" id="751865"/>
<dbReference type="KEGG" id="mmu:751865"/>
<dbReference type="AGR" id="MGI:3802945"/>
<dbReference type="CTD" id="100316904"/>
<dbReference type="MGI" id="MGI:3802945">
    <property type="gene designation" value="Sap25"/>
</dbReference>
<dbReference type="eggNOG" id="ENOG502SWKH">
    <property type="taxonomic scope" value="Eukaryota"/>
</dbReference>
<dbReference type="InParanoid" id="Q1EHW4"/>
<dbReference type="OrthoDB" id="75309at9989"/>
<dbReference type="PhylomeDB" id="Q1EHW4"/>
<dbReference type="BioGRID-ORCS" id="751865">
    <property type="hits" value="3 hits in 80 CRISPR screens"/>
</dbReference>
<dbReference type="ChiTaRS" id="Sap25">
    <property type="organism name" value="mouse"/>
</dbReference>
<dbReference type="EvolutionaryTrace" id="Q1EHW4"/>
<dbReference type="PRO" id="PR:Q1EHW4"/>
<dbReference type="Proteomes" id="UP000000589">
    <property type="component" value="Unplaced"/>
</dbReference>
<dbReference type="RNAct" id="Q1EHW4">
    <property type="molecule type" value="protein"/>
</dbReference>
<dbReference type="GO" id="GO:0005737">
    <property type="term" value="C:cytoplasm"/>
    <property type="evidence" value="ECO:0007669"/>
    <property type="project" value="UniProtKB-SubCell"/>
</dbReference>
<dbReference type="GO" id="GO:0005634">
    <property type="term" value="C:nucleus"/>
    <property type="evidence" value="ECO:0000314"/>
    <property type="project" value="MGI"/>
</dbReference>
<dbReference type="GO" id="GO:0045892">
    <property type="term" value="P:negative regulation of DNA-templated transcription"/>
    <property type="evidence" value="ECO:0000315"/>
    <property type="project" value="MGI"/>
</dbReference>
<dbReference type="Gene3D" id="6.10.140.710">
    <property type="match status" value="1"/>
</dbReference>
<dbReference type="IDEAL" id="IID50088"/>
<dbReference type="InterPro" id="IPR029163">
    <property type="entry name" value="SAP25"/>
</dbReference>
<dbReference type="PANTHER" id="PTHR39231">
    <property type="entry name" value="HISTONE DEACETYLASE COMPLEX SUBUNIT SAP25"/>
    <property type="match status" value="1"/>
</dbReference>
<dbReference type="PANTHER" id="PTHR39231:SF1">
    <property type="entry name" value="HISTONE DEACETYLASE COMPLEX SUBUNIT SAP25"/>
    <property type="match status" value="1"/>
</dbReference>
<dbReference type="Pfam" id="PF15476">
    <property type="entry name" value="SAP25"/>
    <property type="match status" value="1"/>
</dbReference>
<organism>
    <name type="scientific">Mus musculus</name>
    <name type="common">Mouse</name>
    <dbReference type="NCBI Taxonomy" id="10090"/>
    <lineage>
        <taxon>Eukaryota</taxon>
        <taxon>Metazoa</taxon>
        <taxon>Chordata</taxon>
        <taxon>Craniata</taxon>
        <taxon>Vertebrata</taxon>
        <taxon>Euteleostomi</taxon>
        <taxon>Mammalia</taxon>
        <taxon>Eutheria</taxon>
        <taxon>Euarchontoglires</taxon>
        <taxon>Glires</taxon>
        <taxon>Rodentia</taxon>
        <taxon>Myomorpha</taxon>
        <taxon>Muroidea</taxon>
        <taxon>Muridae</taxon>
        <taxon>Murinae</taxon>
        <taxon>Mus</taxon>
        <taxon>Mus</taxon>
    </lineage>
</organism>
<gene>
    <name type="primary">Sap25</name>
</gene>
<feature type="chain" id="PRO_0000350874" description="Histone deacetylase complex subunit SAP25">
    <location>
        <begin position="1"/>
        <end position="186"/>
    </location>
</feature>
<feature type="region of interest" description="Disordered" evidence="1">
    <location>
        <begin position="1"/>
        <end position="25"/>
    </location>
</feature>
<feature type="region of interest" description="Disordered" evidence="1">
    <location>
        <begin position="148"/>
        <end position="186"/>
    </location>
</feature>
<feature type="compositionally biased region" description="Polar residues" evidence="1">
    <location>
        <begin position="148"/>
        <end position="163"/>
    </location>
</feature>
<feature type="compositionally biased region" description="Polar residues" evidence="1">
    <location>
        <begin position="177"/>
        <end position="186"/>
    </location>
</feature>
<feature type="helix" evidence="5">
    <location>
        <begin position="132"/>
        <end position="144"/>
    </location>
</feature>
<feature type="turn" evidence="5">
    <location>
        <begin position="145"/>
        <end position="148"/>
    </location>
</feature>
<feature type="strand" evidence="5">
    <location>
        <begin position="149"/>
        <end position="153"/>
    </location>
</feature>
<feature type="turn" evidence="5">
    <location>
        <begin position="157"/>
        <end position="159"/>
    </location>
</feature>
<feature type="strand" evidence="5">
    <location>
        <begin position="160"/>
        <end position="162"/>
    </location>
</feature>
<feature type="strand" evidence="5">
    <location>
        <begin position="174"/>
        <end position="176"/>
    </location>
</feature>
<feature type="strand" evidence="5">
    <location>
        <begin position="178"/>
        <end position="180"/>
    </location>
</feature>
<sequence>MSPLPLRDPSHQANAGPRLVEPSCGPGVSLSNRTLCHPSWPMYDNWGRSPTTSERPEEEQVVSKDTGVPVRNYEDVFLLDPLLPCGQRVPLILTKPPQQAMDSRKLLLPPPIMSPSVHPSSSQACSSTWLSEAEMIALAGLLQMSQGEQTPNCVASSLPSTSCPDPVSVSEDPGPSGDQSCSGTDT</sequence>
<keyword id="KW-0002">3D-structure</keyword>
<keyword id="KW-0963">Cytoplasm</keyword>
<keyword id="KW-0539">Nucleus</keyword>
<keyword id="KW-1185">Reference proteome</keyword>
<keyword id="KW-0678">Repressor</keyword>
<keyword id="KW-0804">Transcription</keyword>
<keyword id="KW-0805">Transcription regulation</keyword>
<comment type="function">
    <text evidence="2">Involved in the transcriptional repression mediated by the mSIN3A but not the N-CoR corepressor complex.</text>
</comment>
<comment type="subunit">
    <text evidence="2 3">May be a component of the mSIN3A corepressor complex. Interacts with SIN3A and HDAC2.</text>
</comment>
<comment type="interaction">
    <interactant intactId="EBI-937195">
        <id>Q1EHW4</id>
    </interactant>
    <interactant intactId="EBI-349034">
        <id>Q60520</id>
        <label>Sin3a</label>
    </interactant>
    <organismsDiffer>false</organismsDiffer>
    <experiments>4</experiments>
</comment>
<comment type="subcellular location">
    <subcellularLocation>
        <location evidence="2">Nucleus</location>
    </subcellularLocation>
    <subcellularLocation>
        <location evidence="2">Cytoplasm</location>
    </subcellularLocation>
    <text>Shuttles between the nucleus and the cytoplasm.</text>
</comment>
<comment type="tissue specificity">
    <text evidence="2">Widely expressed.</text>
</comment>
<comment type="sequence caution" evidence="4">
    <conflict type="frameshift">
        <sequence resource="EMBL" id="AK164339"/>
    </conflict>
</comment>
<evidence type="ECO:0000256" key="1">
    <source>
        <dbReference type="SAM" id="MobiDB-lite"/>
    </source>
</evidence>
<evidence type="ECO:0000269" key="2">
    <source>
    </source>
</evidence>
<evidence type="ECO:0000269" key="3">
    <source>
    </source>
</evidence>
<evidence type="ECO:0000305" key="4"/>
<evidence type="ECO:0007829" key="5">
    <source>
        <dbReference type="PDB" id="2RMS"/>
    </source>
</evidence>
<name>SAP25_MOUSE</name>